<name>F215A_HUMAN</name>
<evidence type="ECO:0000256" key="1">
    <source>
        <dbReference type="SAM" id="MobiDB-lite"/>
    </source>
</evidence>
<evidence type="ECO:0000305" key="2"/>
<comment type="caution">
    <text evidence="2">Product of a dubious CDS prediction. May be a non-coding RNA. No experimental confirmation available.</text>
</comment>
<protein>
    <recommendedName>
        <fullName>Uncharacterized protein FAM215A</fullName>
    </recommendedName>
    <alternativeName>
        <fullName>Apoptosis-related protein 2</fullName>
        <shortName>APR-2</shortName>
    </alternativeName>
</protein>
<accession>Q9Y5M1</accession>
<accession>Q6NTD6</accession>
<sequence>MVSLWVEGTFPPPGFGLAHVACSGHGMKQKRKPASSEPTPEDALGGSAVPVRFHLHPEGLLWCSRCFFSHGPKGSEPPGRSAGLQGATERSGRPSVQAQAQACENLVPATVWDG</sequence>
<keyword id="KW-1185">Reference proteome</keyword>
<organism>
    <name type="scientific">Homo sapiens</name>
    <name type="common">Human</name>
    <dbReference type="NCBI Taxonomy" id="9606"/>
    <lineage>
        <taxon>Eukaryota</taxon>
        <taxon>Metazoa</taxon>
        <taxon>Chordata</taxon>
        <taxon>Craniata</taxon>
        <taxon>Vertebrata</taxon>
        <taxon>Euteleostomi</taxon>
        <taxon>Mammalia</taxon>
        <taxon>Eutheria</taxon>
        <taxon>Euarchontoglires</taxon>
        <taxon>Primates</taxon>
        <taxon>Haplorrhini</taxon>
        <taxon>Catarrhini</taxon>
        <taxon>Hominidae</taxon>
        <taxon>Homo</taxon>
    </lineage>
</organism>
<proteinExistence type="uncertain"/>
<dbReference type="EMBL" id="AF143236">
    <property type="protein sequence ID" value="AAD31315.1"/>
    <property type="molecule type" value="mRNA"/>
</dbReference>
<dbReference type="EMBL" id="AC007993">
    <property type="status" value="NOT_ANNOTATED_CDS"/>
    <property type="molecule type" value="Genomic_DNA"/>
</dbReference>
<dbReference type="EMBL" id="BC069097">
    <property type="status" value="NOT_ANNOTATED_CDS"/>
    <property type="molecule type" value="mRNA"/>
</dbReference>
<dbReference type="GlyGen" id="Q9Y5M1">
    <property type="glycosylation" value="1 site"/>
</dbReference>
<dbReference type="BioMuta" id="HGNC:17505"/>
<dbReference type="jPOST" id="Q9Y5M1"/>
<dbReference type="PaxDb" id="9606-ENSP00000464743"/>
<dbReference type="UCSC" id="uc010wiq.2">
    <property type="organism name" value="human"/>
</dbReference>
<dbReference type="AGR" id="HGNC:17505"/>
<dbReference type="GeneCards" id="FAM215A"/>
<dbReference type="HGNC" id="HGNC:17505">
    <property type="gene designation" value="FAM215A"/>
</dbReference>
<dbReference type="neXtProt" id="NX_Q9Y5M1"/>
<dbReference type="eggNOG" id="ENOG502TF35">
    <property type="taxonomic scope" value="Eukaryota"/>
</dbReference>
<dbReference type="InParanoid" id="Q9Y5M1"/>
<dbReference type="PAN-GO" id="Q9Y5M1">
    <property type="GO annotations" value="0 GO annotations based on evolutionary models"/>
</dbReference>
<dbReference type="PathwayCommons" id="Q9Y5M1"/>
<dbReference type="Pharos" id="Q9Y5M1">
    <property type="development level" value="Tdark"/>
</dbReference>
<dbReference type="PRO" id="PR:Q9Y5M1"/>
<dbReference type="Proteomes" id="UP000005640">
    <property type="component" value="Unplaced"/>
</dbReference>
<dbReference type="RNAct" id="Q9Y5M1">
    <property type="molecule type" value="protein"/>
</dbReference>
<feature type="chain" id="PRO_0000064641" description="Uncharacterized protein FAM215A">
    <location>
        <begin position="1"/>
        <end position="114"/>
    </location>
</feature>
<feature type="region of interest" description="Disordered" evidence="1">
    <location>
        <begin position="26"/>
        <end position="45"/>
    </location>
</feature>
<feature type="region of interest" description="Disordered" evidence="1">
    <location>
        <begin position="72"/>
        <end position="98"/>
    </location>
</feature>
<feature type="sequence conflict" description="In Ref. 1; AAD31315." evidence="2" ref="1">
    <original>T</original>
    <variation>M</variation>
    <location>
        <position position="39"/>
    </location>
</feature>
<gene>
    <name type="primary">FAM215A</name>
    <name type="synonym">APR2</name>
    <name type="synonym">C17orf88</name>
</gene>
<reference key="1">
    <citation type="journal article" date="2000" name="BioTechniques">
        <title>Improved PCR-based subtractive hybridization strategy for cloning differentially expressed genes.</title>
        <authorList>
            <person name="Zhu F."/>
            <person name="Yan W."/>
            <person name="Zhao Z.L."/>
            <person name="Chai Y.B."/>
            <person name="Lu F."/>
            <person name="Wang Q."/>
            <person name="Peng W.D."/>
            <person name="Yang A.G."/>
            <person name="Wang C.J."/>
        </authorList>
    </citation>
    <scope>NUCLEOTIDE SEQUENCE [MRNA]</scope>
</reference>
<reference key="2">
    <citation type="journal article" date="2006" name="Nature">
        <title>DNA sequence of human chromosome 17 and analysis of rearrangement in the human lineage.</title>
        <authorList>
            <person name="Zody M.C."/>
            <person name="Garber M."/>
            <person name="Adams D.J."/>
            <person name="Sharpe T."/>
            <person name="Harrow J."/>
            <person name="Lupski J.R."/>
            <person name="Nicholson C."/>
            <person name="Searle S.M."/>
            <person name="Wilming L."/>
            <person name="Young S.K."/>
            <person name="Abouelleil A."/>
            <person name="Allen N.R."/>
            <person name="Bi W."/>
            <person name="Bloom T."/>
            <person name="Borowsky M.L."/>
            <person name="Bugalter B.E."/>
            <person name="Butler J."/>
            <person name="Chang J.L."/>
            <person name="Chen C.-K."/>
            <person name="Cook A."/>
            <person name="Corum B."/>
            <person name="Cuomo C.A."/>
            <person name="de Jong P.J."/>
            <person name="DeCaprio D."/>
            <person name="Dewar K."/>
            <person name="FitzGerald M."/>
            <person name="Gilbert J."/>
            <person name="Gibson R."/>
            <person name="Gnerre S."/>
            <person name="Goldstein S."/>
            <person name="Grafham D.V."/>
            <person name="Grocock R."/>
            <person name="Hafez N."/>
            <person name="Hagopian D.S."/>
            <person name="Hart E."/>
            <person name="Norman C.H."/>
            <person name="Humphray S."/>
            <person name="Jaffe D.B."/>
            <person name="Jones M."/>
            <person name="Kamal M."/>
            <person name="Khodiyar V.K."/>
            <person name="LaButti K."/>
            <person name="Laird G."/>
            <person name="Lehoczky J."/>
            <person name="Liu X."/>
            <person name="Lokyitsang T."/>
            <person name="Loveland J."/>
            <person name="Lui A."/>
            <person name="Macdonald P."/>
            <person name="Major J.E."/>
            <person name="Matthews L."/>
            <person name="Mauceli E."/>
            <person name="McCarroll S.A."/>
            <person name="Mihalev A.H."/>
            <person name="Mudge J."/>
            <person name="Nguyen C."/>
            <person name="Nicol R."/>
            <person name="O'Leary S.B."/>
            <person name="Osoegawa K."/>
            <person name="Schwartz D.C."/>
            <person name="Shaw-Smith C."/>
            <person name="Stankiewicz P."/>
            <person name="Steward C."/>
            <person name="Swarbreck D."/>
            <person name="Venkataraman V."/>
            <person name="Whittaker C.A."/>
            <person name="Yang X."/>
            <person name="Zimmer A.R."/>
            <person name="Bradley A."/>
            <person name="Hubbard T."/>
            <person name="Birren B.W."/>
            <person name="Rogers J."/>
            <person name="Lander E.S."/>
            <person name="Nusbaum C."/>
        </authorList>
    </citation>
    <scope>NUCLEOTIDE SEQUENCE [LARGE SCALE GENOMIC DNA]</scope>
</reference>
<reference key="3">
    <citation type="journal article" date="2004" name="Genome Res.">
        <title>The status, quality, and expansion of the NIH full-length cDNA project: the Mammalian Gene Collection (MGC).</title>
        <authorList>
            <consortium name="The MGC Project Team"/>
        </authorList>
    </citation>
    <scope>NUCLEOTIDE SEQUENCE [LARGE SCALE MRNA]</scope>
</reference>